<sequence>MTKSISIEHLQFDEKGLIPAIVQDHQSGQVLTLAYMNSDSITKTIETNETWFYSRKRQELWNKGATSGNKQTVKQISFDCDADAVLVLVDAQGPACHTGEESCFYEDLYKNDVALLQIIPQVSAKIKERHEHPVEGAYTSYLFEKGVDKILKKIGEEATEVVIAAKNEDKQELTSELSDLLYHSLVLMEQQGVTLEDIKKELYKRHVEKEGQQRE</sequence>
<accession>Q8CXM8</accession>
<dbReference type="EC" id="3.5.4.19" evidence="1"/>
<dbReference type="EC" id="3.6.1.31" evidence="1"/>
<dbReference type="EMBL" id="BA000028">
    <property type="protein sequence ID" value="BAC12502.1"/>
    <property type="molecule type" value="Genomic_DNA"/>
</dbReference>
<dbReference type="RefSeq" id="WP_011064949.1">
    <property type="nucleotide sequence ID" value="NC_004193.1"/>
</dbReference>
<dbReference type="SMR" id="Q8CXM8"/>
<dbReference type="STRING" id="221109.gene:10732750"/>
<dbReference type="KEGG" id="oih:OB0546"/>
<dbReference type="eggNOG" id="COG0139">
    <property type="taxonomic scope" value="Bacteria"/>
</dbReference>
<dbReference type="eggNOG" id="COG0140">
    <property type="taxonomic scope" value="Bacteria"/>
</dbReference>
<dbReference type="HOGENOM" id="CLU_048577_3_1_9"/>
<dbReference type="OrthoDB" id="9795769at2"/>
<dbReference type="PhylomeDB" id="Q8CXM8"/>
<dbReference type="UniPathway" id="UPA00031">
    <property type="reaction ID" value="UER00007"/>
</dbReference>
<dbReference type="UniPathway" id="UPA00031">
    <property type="reaction ID" value="UER00008"/>
</dbReference>
<dbReference type="Proteomes" id="UP000000822">
    <property type="component" value="Chromosome"/>
</dbReference>
<dbReference type="GO" id="GO:0005737">
    <property type="term" value="C:cytoplasm"/>
    <property type="evidence" value="ECO:0007669"/>
    <property type="project" value="UniProtKB-SubCell"/>
</dbReference>
<dbReference type="GO" id="GO:0005524">
    <property type="term" value="F:ATP binding"/>
    <property type="evidence" value="ECO:0007669"/>
    <property type="project" value="UniProtKB-KW"/>
</dbReference>
<dbReference type="GO" id="GO:0004635">
    <property type="term" value="F:phosphoribosyl-AMP cyclohydrolase activity"/>
    <property type="evidence" value="ECO:0007669"/>
    <property type="project" value="UniProtKB-UniRule"/>
</dbReference>
<dbReference type="GO" id="GO:0004636">
    <property type="term" value="F:phosphoribosyl-ATP diphosphatase activity"/>
    <property type="evidence" value="ECO:0007669"/>
    <property type="project" value="UniProtKB-UniRule"/>
</dbReference>
<dbReference type="GO" id="GO:0000105">
    <property type="term" value="P:L-histidine biosynthetic process"/>
    <property type="evidence" value="ECO:0007669"/>
    <property type="project" value="UniProtKB-UniRule"/>
</dbReference>
<dbReference type="CDD" id="cd11534">
    <property type="entry name" value="NTP-PPase_HisIE_like"/>
    <property type="match status" value="1"/>
</dbReference>
<dbReference type="FunFam" id="3.10.20.810:FF:000001">
    <property type="entry name" value="Histidine biosynthesis bifunctional protein HisIE"/>
    <property type="match status" value="1"/>
</dbReference>
<dbReference type="Gene3D" id="1.10.287.1080">
    <property type="entry name" value="MazG-like"/>
    <property type="match status" value="1"/>
</dbReference>
<dbReference type="Gene3D" id="3.10.20.810">
    <property type="entry name" value="Phosphoribosyl-AMP cyclohydrolase"/>
    <property type="match status" value="1"/>
</dbReference>
<dbReference type="HAMAP" id="MF_01020">
    <property type="entry name" value="HisE"/>
    <property type="match status" value="1"/>
</dbReference>
<dbReference type="HAMAP" id="MF_01021">
    <property type="entry name" value="HisI"/>
    <property type="match status" value="1"/>
</dbReference>
<dbReference type="HAMAP" id="MF_01019">
    <property type="entry name" value="HisIE"/>
    <property type="match status" value="1"/>
</dbReference>
<dbReference type="InterPro" id="IPR023019">
    <property type="entry name" value="His_synth_HisIE"/>
</dbReference>
<dbReference type="InterPro" id="IPR008179">
    <property type="entry name" value="HisE"/>
</dbReference>
<dbReference type="InterPro" id="IPR026660">
    <property type="entry name" value="PRA-CH"/>
</dbReference>
<dbReference type="InterPro" id="IPR021130">
    <property type="entry name" value="PRib-ATP_PPHydrolase-like"/>
</dbReference>
<dbReference type="InterPro" id="IPR002496">
    <property type="entry name" value="PRib_AMP_CycHydrolase_dom"/>
</dbReference>
<dbReference type="InterPro" id="IPR038019">
    <property type="entry name" value="PRib_AMP_CycHydrolase_sf"/>
</dbReference>
<dbReference type="NCBIfam" id="TIGR03188">
    <property type="entry name" value="histidine_hisI"/>
    <property type="match status" value="1"/>
</dbReference>
<dbReference type="NCBIfam" id="NF000768">
    <property type="entry name" value="PRK00051.1"/>
    <property type="match status" value="1"/>
</dbReference>
<dbReference type="NCBIfam" id="NF002747">
    <property type="entry name" value="PRK02759.1"/>
    <property type="match status" value="1"/>
</dbReference>
<dbReference type="PANTHER" id="PTHR42945">
    <property type="entry name" value="HISTIDINE BIOSYNTHESIS BIFUNCTIONAL PROTEIN"/>
    <property type="match status" value="1"/>
</dbReference>
<dbReference type="PANTHER" id="PTHR42945:SF9">
    <property type="entry name" value="HISTIDINE BIOSYNTHESIS BIFUNCTIONAL PROTEIN HISIE"/>
    <property type="match status" value="1"/>
</dbReference>
<dbReference type="Pfam" id="PF01502">
    <property type="entry name" value="PRA-CH"/>
    <property type="match status" value="1"/>
</dbReference>
<dbReference type="Pfam" id="PF01503">
    <property type="entry name" value="PRA-PH"/>
    <property type="match status" value="1"/>
</dbReference>
<dbReference type="SUPFAM" id="SSF101386">
    <property type="entry name" value="all-alpha NTP pyrophosphatases"/>
    <property type="match status" value="1"/>
</dbReference>
<dbReference type="SUPFAM" id="SSF141734">
    <property type="entry name" value="HisI-like"/>
    <property type="match status" value="1"/>
</dbReference>
<name>HIS2_OCEIH</name>
<protein>
    <recommendedName>
        <fullName evidence="1">Histidine biosynthesis bifunctional protein HisIE</fullName>
    </recommendedName>
    <domain>
        <recommendedName>
            <fullName evidence="1">Phosphoribosyl-AMP cyclohydrolase</fullName>
            <shortName evidence="1">PRA-CH</shortName>
            <ecNumber evidence="1">3.5.4.19</ecNumber>
        </recommendedName>
    </domain>
    <domain>
        <recommendedName>
            <fullName evidence="1">Phosphoribosyl-ATP pyrophosphatase</fullName>
            <shortName evidence="1">PRA-PH</shortName>
            <ecNumber evidence="1">3.6.1.31</ecNumber>
        </recommendedName>
    </domain>
</protein>
<organism>
    <name type="scientific">Oceanobacillus iheyensis (strain DSM 14371 / CIP 107618 / JCM 11309 / KCTC 3954 / HTE831)</name>
    <dbReference type="NCBI Taxonomy" id="221109"/>
    <lineage>
        <taxon>Bacteria</taxon>
        <taxon>Bacillati</taxon>
        <taxon>Bacillota</taxon>
        <taxon>Bacilli</taxon>
        <taxon>Bacillales</taxon>
        <taxon>Bacillaceae</taxon>
        <taxon>Oceanobacillus</taxon>
    </lineage>
</organism>
<keyword id="KW-0028">Amino-acid biosynthesis</keyword>
<keyword id="KW-0067">ATP-binding</keyword>
<keyword id="KW-0963">Cytoplasm</keyword>
<keyword id="KW-0368">Histidine biosynthesis</keyword>
<keyword id="KW-0378">Hydrolase</keyword>
<keyword id="KW-0511">Multifunctional enzyme</keyword>
<keyword id="KW-0547">Nucleotide-binding</keyword>
<keyword id="KW-1185">Reference proteome</keyword>
<gene>
    <name evidence="1" type="primary">hisI</name>
    <name evidence="1" type="synonym">hisIE</name>
    <name type="ordered locus">OB0546</name>
</gene>
<reference key="1">
    <citation type="journal article" date="2002" name="Nucleic Acids Res.">
        <title>Genome sequence of Oceanobacillus iheyensis isolated from the Iheya Ridge and its unexpected adaptive capabilities to extreme environments.</title>
        <authorList>
            <person name="Takami H."/>
            <person name="Takaki Y."/>
            <person name="Uchiyama I."/>
        </authorList>
    </citation>
    <scope>NUCLEOTIDE SEQUENCE [LARGE SCALE GENOMIC DNA]</scope>
    <source>
        <strain>DSM 14371 / CIP 107618 / JCM 11309 / KCTC 3954 / HTE831</strain>
    </source>
</reference>
<evidence type="ECO:0000255" key="1">
    <source>
        <dbReference type="HAMAP-Rule" id="MF_01019"/>
    </source>
</evidence>
<feature type="chain" id="PRO_0000136419" description="Histidine biosynthesis bifunctional protein HisIE">
    <location>
        <begin position="1"/>
        <end position="215"/>
    </location>
</feature>
<feature type="region of interest" description="Phosphoribosyl-AMP cyclohydrolase">
    <location>
        <begin position="1"/>
        <end position="118"/>
    </location>
</feature>
<feature type="region of interest" description="Phosphoribosyl-ATP pyrophosphohydrolase">
    <location>
        <begin position="119"/>
        <end position="215"/>
    </location>
</feature>
<proteinExistence type="inferred from homology"/>
<comment type="catalytic activity">
    <reaction evidence="1">
        <text>1-(5-phospho-beta-D-ribosyl)-ATP + H2O = 1-(5-phospho-beta-D-ribosyl)-5'-AMP + diphosphate + H(+)</text>
        <dbReference type="Rhea" id="RHEA:22828"/>
        <dbReference type="ChEBI" id="CHEBI:15377"/>
        <dbReference type="ChEBI" id="CHEBI:15378"/>
        <dbReference type="ChEBI" id="CHEBI:33019"/>
        <dbReference type="ChEBI" id="CHEBI:59457"/>
        <dbReference type="ChEBI" id="CHEBI:73183"/>
        <dbReference type="EC" id="3.6.1.31"/>
    </reaction>
</comment>
<comment type="catalytic activity">
    <reaction evidence="1">
        <text>1-(5-phospho-beta-D-ribosyl)-5'-AMP + H2O = 1-(5-phospho-beta-D-ribosyl)-5-[(5-phospho-beta-D-ribosylamino)methylideneamino]imidazole-4-carboxamide</text>
        <dbReference type="Rhea" id="RHEA:20049"/>
        <dbReference type="ChEBI" id="CHEBI:15377"/>
        <dbReference type="ChEBI" id="CHEBI:58435"/>
        <dbReference type="ChEBI" id="CHEBI:59457"/>
        <dbReference type="EC" id="3.5.4.19"/>
    </reaction>
</comment>
<comment type="pathway">
    <text evidence="1">Amino-acid biosynthesis; L-histidine biosynthesis; L-histidine from 5-phospho-alpha-D-ribose 1-diphosphate: step 2/9.</text>
</comment>
<comment type="pathway">
    <text evidence="1">Amino-acid biosynthesis; L-histidine biosynthesis; L-histidine from 5-phospho-alpha-D-ribose 1-diphosphate: step 3/9.</text>
</comment>
<comment type="subcellular location">
    <subcellularLocation>
        <location evidence="1">Cytoplasm</location>
    </subcellularLocation>
</comment>
<comment type="similarity">
    <text evidence="1">In the N-terminal section; belongs to the PRA-CH family.</text>
</comment>
<comment type="similarity">
    <text evidence="1">In the C-terminal section; belongs to the PRA-PH family.</text>
</comment>